<name>SYFB_BORDL</name>
<feature type="chain" id="PRO_1000114940" description="Phenylalanine--tRNA ligase beta subunit">
    <location>
        <begin position="1"/>
        <end position="564"/>
    </location>
</feature>
<feature type="domain" description="B5" evidence="1">
    <location>
        <begin position="286"/>
        <end position="362"/>
    </location>
</feature>
<feature type="binding site" evidence="1">
    <location>
        <position position="340"/>
    </location>
    <ligand>
        <name>Mg(2+)</name>
        <dbReference type="ChEBI" id="CHEBI:18420"/>
        <note>shared with alpha subunit</note>
    </ligand>
</feature>
<feature type="binding site" evidence="1">
    <location>
        <position position="346"/>
    </location>
    <ligand>
        <name>Mg(2+)</name>
        <dbReference type="ChEBI" id="CHEBI:18420"/>
        <note>shared with alpha subunit</note>
    </ligand>
</feature>
<feature type="binding site" evidence="1">
    <location>
        <position position="349"/>
    </location>
    <ligand>
        <name>Mg(2+)</name>
        <dbReference type="ChEBI" id="CHEBI:18420"/>
        <note>shared with alpha subunit</note>
    </ligand>
</feature>
<feature type="binding site" evidence="1">
    <location>
        <position position="350"/>
    </location>
    <ligand>
        <name>Mg(2+)</name>
        <dbReference type="ChEBI" id="CHEBI:18420"/>
        <note>shared with alpha subunit</note>
    </ligand>
</feature>
<accession>B5RM71</accession>
<comment type="catalytic activity">
    <reaction evidence="1">
        <text>tRNA(Phe) + L-phenylalanine + ATP = L-phenylalanyl-tRNA(Phe) + AMP + diphosphate + H(+)</text>
        <dbReference type="Rhea" id="RHEA:19413"/>
        <dbReference type="Rhea" id="RHEA-COMP:9668"/>
        <dbReference type="Rhea" id="RHEA-COMP:9699"/>
        <dbReference type="ChEBI" id="CHEBI:15378"/>
        <dbReference type="ChEBI" id="CHEBI:30616"/>
        <dbReference type="ChEBI" id="CHEBI:33019"/>
        <dbReference type="ChEBI" id="CHEBI:58095"/>
        <dbReference type="ChEBI" id="CHEBI:78442"/>
        <dbReference type="ChEBI" id="CHEBI:78531"/>
        <dbReference type="ChEBI" id="CHEBI:456215"/>
        <dbReference type="EC" id="6.1.1.20"/>
    </reaction>
</comment>
<comment type="cofactor">
    <cofactor evidence="1">
        <name>Mg(2+)</name>
        <dbReference type="ChEBI" id="CHEBI:18420"/>
    </cofactor>
</comment>
<comment type="subunit">
    <text evidence="1">Tetramer of two alpha and two beta subunits.</text>
</comment>
<comment type="subcellular location">
    <subcellularLocation>
        <location evidence="1">Cytoplasm</location>
    </subcellularLocation>
</comment>
<comment type="similarity">
    <text evidence="1">Belongs to the phenylalanyl-tRNA synthetase beta subunit family. Type 2 subfamily.</text>
</comment>
<keyword id="KW-0030">Aminoacyl-tRNA synthetase</keyword>
<keyword id="KW-0067">ATP-binding</keyword>
<keyword id="KW-0963">Cytoplasm</keyword>
<keyword id="KW-0436">Ligase</keyword>
<keyword id="KW-0460">Magnesium</keyword>
<keyword id="KW-0479">Metal-binding</keyword>
<keyword id="KW-0547">Nucleotide-binding</keyword>
<keyword id="KW-0648">Protein biosynthesis</keyword>
<dbReference type="EC" id="6.1.1.20" evidence="1"/>
<dbReference type="EMBL" id="CP000976">
    <property type="protein sequence ID" value="ACH93457.1"/>
    <property type="molecule type" value="Genomic_DNA"/>
</dbReference>
<dbReference type="RefSeq" id="WP_012538266.1">
    <property type="nucleotide sequence ID" value="NC_011229.1"/>
</dbReference>
<dbReference type="SMR" id="B5RM71"/>
<dbReference type="STRING" id="412419.BDU_516"/>
<dbReference type="KEGG" id="bdu:BDU_516"/>
<dbReference type="eggNOG" id="COG0072">
    <property type="taxonomic scope" value="Bacteria"/>
</dbReference>
<dbReference type="HOGENOM" id="CLU_020279_3_0_12"/>
<dbReference type="OrthoDB" id="9805455at2"/>
<dbReference type="Proteomes" id="UP000000611">
    <property type="component" value="Chromosome"/>
</dbReference>
<dbReference type="GO" id="GO:0009328">
    <property type="term" value="C:phenylalanine-tRNA ligase complex"/>
    <property type="evidence" value="ECO:0007669"/>
    <property type="project" value="TreeGrafter"/>
</dbReference>
<dbReference type="GO" id="GO:0005524">
    <property type="term" value="F:ATP binding"/>
    <property type="evidence" value="ECO:0007669"/>
    <property type="project" value="UniProtKB-UniRule"/>
</dbReference>
<dbReference type="GO" id="GO:0000287">
    <property type="term" value="F:magnesium ion binding"/>
    <property type="evidence" value="ECO:0007669"/>
    <property type="project" value="InterPro"/>
</dbReference>
<dbReference type="GO" id="GO:0004826">
    <property type="term" value="F:phenylalanine-tRNA ligase activity"/>
    <property type="evidence" value="ECO:0007669"/>
    <property type="project" value="UniProtKB-UniRule"/>
</dbReference>
<dbReference type="GO" id="GO:0003723">
    <property type="term" value="F:RNA binding"/>
    <property type="evidence" value="ECO:0007669"/>
    <property type="project" value="InterPro"/>
</dbReference>
<dbReference type="GO" id="GO:0006432">
    <property type="term" value="P:phenylalanyl-tRNA aminoacylation"/>
    <property type="evidence" value="ECO:0007669"/>
    <property type="project" value="UniProtKB-UniRule"/>
</dbReference>
<dbReference type="Gene3D" id="3.30.56.10">
    <property type="match status" value="2"/>
</dbReference>
<dbReference type="Gene3D" id="3.30.930.10">
    <property type="entry name" value="Bira Bifunctional Protein, Domain 2"/>
    <property type="match status" value="1"/>
</dbReference>
<dbReference type="Gene3D" id="3.50.40.10">
    <property type="entry name" value="Phenylalanyl-trna Synthetase, Chain B, domain 3"/>
    <property type="match status" value="1"/>
</dbReference>
<dbReference type="HAMAP" id="MF_00284">
    <property type="entry name" value="Phe_tRNA_synth_beta2"/>
    <property type="match status" value="1"/>
</dbReference>
<dbReference type="InterPro" id="IPR045864">
    <property type="entry name" value="aa-tRNA-synth_II/BPL/LPL"/>
</dbReference>
<dbReference type="InterPro" id="IPR009061">
    <property type="entry name" value="DNA-bd_dom_put_sf"/>
</dbReference>
<dbReference type="InterPro" id="IPR045060">
    <property type="entry name" value="Phe-tRNA-ligase_IIc_bsu"/>
</dbReference>
<dbReference type="InterPro" id="IPR004531">
    <property type="entry name" value="Phe-tRNA-synth_IIc_bsu_arc_euk"/>
</dbReference>
<dbReference type="InterPro" id="IPR020825">
    <property type="entry name" value="Phe-tRNA_synthase-like_B3/B4"/>
</dbReference>
<dbReference type="InterPro" id="IPR022918">
    <property type="entry name" value="Phe_tRNA_ligase_beta2_arc"/>
</dbReference>
<dbReference type="InterPro" id="IPR041616">
    <property type="entry name" value="PheRS_beta_core"/>
</dbReference>
<dbReference type="InterPro" id="IPR005147">
    <property type="entry name" value="tRNA_synthase_B5-dom"/>
</dbReference>
<dbReference type="NCBIfam" id="TIGR00471">
    <property type="entry name" value="pheT_arch"/>
    <property type="match status" value="1"/>
</dbReference>
<dbReference type="PANTHER" id="PTHR10947:SF0">
    <property type="entry name" value="PHENYLALANINE--TRNA LIGASE BETA SUBUNIT"/>
    <property type="match status" value="1"/>
</dbReference>
<dbReference type="PANTHER" id="PTHR10947">
    <property type="entry name" value="PHENYLALANYL-TRNA SYNTHETASE BETA CHAIN AND LEUCINE-RICH REPEAT-CONTAINING PROTEIN 47"/>
    <property type="match status" value="1"/>
</dbReference>
<dbReference type="Pfam" id="PF03484">
    <property type="entry name" value="B5"/>
    <property type="match status" value="1"/>
</dbReference>
<dbReference type="Pfam" id="PF17759">
    <property type="entry name" value="tRNA_synthFbeta"/>
    <property type="match status" value="1"/>
</dbReference>
<dbReference type="SMART" id="SM00874">
    <property type="entry name" value="B5"/>
    <property type="match status" value="1"/>
</dbReference>
<dbReference type="SUPFAM" id="SSF55681">
    <property type="entry name" value="Class II aaRS and biotin synthetases"/>
    <property type="match status" value="1"/>
</dbReference>
<dbReference type="SUPFAM" id="SSF46955">
    <property type="entry name" value="Putative DNA-binding domain"/>
    <property type="match status" value="1"/>
</dbReference>
<dbReference type="PROSITE" id="PS51483">
    <property type="entry name" value="B5"/>
    <property type="match status" value="1"/>
</dbReference>
<protein>
    <recommendedName>
        <fullName evidence="1">Phenylalanine--tRNA ligase beta subunit</fullName>
        <ecNumber evidence="1">6.1.1.20</ecNumber>
    </recommendedName>
    <alternativeName>
        <fullName evidence="1">Phenylalanyl-tRNA synthetase beta subunit</fullName>
        <shortName evidence="1">PheRS</shortName>
    </alternativeName>
</protein>
<sequence>MPKVEIYKSILLEKIGKNLTNYELESIIETAKAEICEIDIVNDKIKIEFNDTNRPDLWSSAGLARHIKTYLSGNVPSFDFFSMTDNLQKFYGEIFVSPEVFGIRPFIFGFLAKGMICDERMLEILIQLQEKLSHNYGQKRKRVAMGMYSSNLINFPINYVTCSSDYKFVPLGMDIEMSIKEINEKHPKGIEYSPIFENVDQYSLLLDYKNNVLSYPPIINSRDIGTLKVGDTNLFIEVTGTDLEATLLSLSIVACDLYDMGFKILPVKTVFPKETLFGKEIICPYYFQNSLKINVDSVNKLLGSNFTANDMCLDLKKLGISAYFEESDTFYIMPPVYRNDFLHEVDVIEEVMIGKGLDNFKSELPKDFTIGKLSPIEEFSRSVRNLMIGMGFQEMIYNYLGSKVDFIEKMNIKGSELLSVSNPMTESYEYIRGSIISDLLKSESISSNFPYPHKIFEIGKVALKDLVSDEGTVTYDNLAFLMADKEFSFNEINSLVSSLFYYLNIGFKVKESSKNLYIDGRGADILVNDIVLGSFGEVSPYILSNFGIMVPCCVLEININGLLH</sequence>
<proteinExistence type="inferred from homology"/>
<organism>
    <name type="scientific">Borrelia duttonii (strain Ly)</name>
    <dbReference type="NCBI Taxonomy" id="412419"/>
    <lineage>
        <taxon>Bacteria</taxon>
        <taxon>Pseudomonadati</taxon>
        <taxon>Spirochaetota</taxon>
        <taxon>Spirochaetia</taxon>
        <taxon>Spirochaetales</taxon>
        <taxon>Borreliaceae</taxon>
        <taxon>Borrelia</taxon>
    </lineage>
</organism>
<reference key="1">
    <citation type="journal article" date="2008" name="PLoS Genet.">
        <title>The genome of Borrelia recurrentis, the agent of deadly louse-borne relapsing fever, is a degraded subset of tick-borne Borrelia duttonii.</title>
        <authorList>
            <person name="Lescot M."/>
            <person name="Audic S."/>
            <person name="Robert C."/>
            <person name="Nguyen T.T."/>
            <person name="Blanc G."/>
            <person name="Cutler S.J."/>
            <person name="Wincker P."/>
            <person name="Couloux A."/>
            <person name="Claverie J.-M."/>
            <person name="Raoult D."/>
            <person name="Drancourt M."/>
        </authorList>
    </citation>
    <scope>NUCLEOTIDE SEQUENCE [LARGE SCALE GENOMIC DNA]</scope>
    <source>
        <strain>Ly</strain>
    </source>
</reference>
<gene>
    <name evidence="1" type="primary">pheT</name>
    <name type="ordered locus">BDU_516</name>
</gene>
<evidence type="ECO:0000255" key="1">
    <source>
        <dbReference type="HAMAP-Rule" id="MF_00284"/>
    </source>
</evidence>